<protein>
    <recommendedName>
        <fullName>Activity-dependent neuroprotector homeobox protein</fullName>
    </recommendedName>
    <alternativeName>
        <fullName>Activity-dependent neuroprotective protein</fullName>
    </alternativeName>
</protein>
<organism>
    <name type="scientific">Rattus norvegicus</name>
    <name type="common">Rat</name>
    <dbReference type="NCBI Taxonomy" id="10116"/>
    <lineage>
        <taxon>Eukaryota</taxon>
        <taxon>Metazoa</taxon>
        <taxon>Chordata</taxon>
        <taxon>Craniata</taxon>
        <taxon>Vertebrata</taxon>
        <taxon>Euteleostomi</taxon>
        <taxon>Mammalia</taxon>
        <taxon>Eutheria</taxon>
        <taxon>Euarchontoglires</taxon>
        <taxon>Glires</taxon>
        <taxon>Rodentia</taxon>
        <taxon>Myomorpha</taxon>
        <taxon>Muroidea</taxon>
        <taxon>Muridae</taxon>
        <taxon>Murinae</taxon>
        <taxon>Rattus</taxon>
    </lineage>
</organism>
<reference key="1">
    <citation type="journal article" date="2004" name="Nature">
        <title>Genome sequence of the Brown Norway rat yields insights into mammalian evolution.</title>
        <authorList>
            <person name="Gibbs R.A."/>
            <person name="Weinstock G.M."/>
            <person name="Metzker M.L."/>
            <person name="Muzny D.M."/>
            <person name="Sodergren E.J."/>
            <person name="Scherer S."/>
            <person name="Scott G."/>
            <person name="Steffen D."/>
            <person name="Worley K.C."/>
            <person name="Burch P.E."/>
            <person name="Okwuonu G."/>
            <person name="Hines S."/>
            <person name="Lewis L."/>
            <person name="Deramo C."/>
            <person name="Delgado O."/>
            <person name="Dugan-Rocha S."/>
            <person name="Miner G."/>
            <person name="Morgan M."/>
            <person name="Hawes A."/>
            <person name="Gill R."/>
            <person name="Holt R.A."/>
            <person name="Adams M.D."/>
            <person name="Amanatides P.G."/>
            <person name="Baden-Tillson H."/>
            <person name="Barnstead M."/>
            <person name="Chin S."/>
            <person name="Evans C.A."/>
            <person name="Ferriera S."/>
            <person name="Fosler C."/>
            <person name="Glodek A."/>
            <person name="Gu Z."/>
            <person name="Jennings D."/>
            <person name="Kraft C.L."/>
            <person name="Nguyen T."/>
            <person name="Pfannkoch C.M."/>
            <person name="Sitter C."/>
            <person name="Sutton G.G."/>
            <person name="Venter J.C."/>
            <person name="Woodage T."/>
            <person name="Smith D."/>
            <person name="Lee H.-M."/>
            <person name="Gustafson E."/>
            <person name="Cahill P."/>
            <person name="Kana A."/>
            <person name="Doucette-Stamm L."/>
            <person name="Weinstock K."/>
            <person name="Fechtel K."/>
            <person name="Weiss R.B."/>
            <person name="Dunn D.M."/>
            <person name="Green E.D."/>
            <person name="Blakesley R.W."/>
            <person name="Bouffard G.G."/>
            <person name="De Jong P.J."/>
            <person name="Osoegawa K."/>
            <person name="Zhu B."/>
            <person name="Marra M."/>
            <person name="Schein J."/>
            <person name="Bosdet I."/>
            <person name="Fjell C."/>
            <person name="Jones S."/>
            <person name="Krzywinski M."/>
            <person name="Mathewson C."/>
            <person name="Siddiqui A."/>
            <person name="Wye N."/>
            <person name="McPherson J."/>
            <person name="Zhao S."/>
            <person name="Fraser C.M."/>
            <person name="Shetty J."/>
            <person name="Shatsman S."/>
            <person name="Geer K."/>
            <person name="Chen Y."/>
            <person name="Abramzon S."/>
            <person name="Nierman W.C."/>
            <person name="Havlak P.H."/>
            <person name="Chen R."/>
            <person name="Durbin K.J."/>
            <person name="Egan A."/>
            <person name="Ren Y."/>
            <person name="Song X.-Z."/>
            <person name="Li B."/>
            <person name="Liu Y."/>
            <person name="Qin X."/>
            <person name="Cawley S."/>
            <person name="Cooney A.J."/>
            <person name="D'Souza L.M."/>
            <person name="Martin K."/>
            <person name="Wu J.Q."/>
            <person name="Gonzalez-Garay M.L."/>
            <person name="Jackson A.R."/>
            <person name="Kalafus K.J."/>
            <person name="McLeod M.P."/>
            <person name="Milosavljevic A."/>
            <person name="Virk D."/>
            <person name="Volkov A."/>
            <person name="Wheeler D.A."/>
            <person name="Zhang Z."/>
            <person name="Bailey J.A."/>
            <person name="Eichler E.E."/>
            <person name="Tuzun E."/>
            <person name="Birney E."/>
            <person name="Mongin E."/>
            <person name="Ureta-Vidal A."/>
            <person name="Woodwark C."/>
            <person name="Zdobnov E."/>
            <person name="Bork P."/>
            <person name="Suyama M."/>
            <person name="Torrents D."/>
            <person name="Alexandersson M."/>
            <person name="Trask B.J."/>
            <person name="Young J.M."/>
            <person name="Huang H."/>
            <person name="Wang H."/>
            <person name="Xing H."/>
            <person name="Daniels S."/>
            <person name="Gietzen D."/>
            <person name="Schmidt J."/>
            <person name="Stevens K."/>
            <person name="Vitt U."/>
            <person name="Wingrove J."/>
            <person name="Camara F."/>
            <person name="Mar Alba M."/>
            <person name="Abril J.F."/>
            <person name="Guigo R."/>
            <person name="Smit A."/>
            <person name="Dubchak I."/>
            <person name="Rubin E.M."/>
            <person name="Couronne O."/>
            <person name="Poliakov A."/>
            <person name="Huebner N."/>
            <person name="Ganten D."/>
            <person name="Goesele C."/>
            <person name="Hummel O."/>
            <person name="Kreitler T."/>
            <person name="Lee Y.-A."/>
            <person name="Monti J."/>
            <person name="Schulz H."/>
            <person name="Zimdahl H."/>
            <person name="Himmelbauer H."/>
            <person name="Lehrach H."/>
            <person name="Jacob H.J."/>
            <person name="Bromberg S."/>
            <person name="Gullings-Handley J."/>
            <person name="Jensen-Seaman M.I."/>
            <person name="Kwitek A.E."/>
            <person name="Lazar J."/>
            <person name="Pasko D."/>
            <person name="Tonellato P.J."/>
            <person name="Twigger S."/>
            <person name="Ponting C.P."/>
            <person name="Duarte J.M."/>
            <person name="Rice S."/>
            <person name="Goodstadt L."/>
            <person name="Beatson S.A."/>
            <person name="Emes R.D."/>
            <person name="Winter E.E."/>
            <person name="Webber C."/>
            <person name="Brandt P."/>
            <person name="Nyakatura G."/>
            <person name="Adetobi M."/>
            <person name="Chiaromonte F."/>
            <person name="Elnitski L."/>
            <person name="Eswara P."/>
            <person name="Hardison R.C."/>
            <person name="Hou M."/>
            <person name="Kolbe D."/>
            <person name="Makova K."/>
            <person name="Miller W."/>
            <person name="Nekrutenko A."/>
            <person name="Riemer C."/>
            <person name="Schwartz S."/>
            <person name="Taylor J."/>
            <person name="Yang S."/>
            <person name="Zhang Y."/>
            <person name="Lindpaintner K."/>
            <person name="Andrews T.D."/>
            <person name="Caccamo M."/>
            <person name="Clamp M."/>
            <person name="Clarke L."/>
            <person name="Curwen V."/>
            <person name="Durbin R.M."/>
            <person name="Eyras E."/>
            <person name="Searle S.M."/>
            <person name="Cooper G.M."/>
            <person name="Batzoglou S."/>
            <person name="Brudno M."/>
            <person name="Sidow A."/>
            <person name="Stone E.A."/>
            <person name="Payseur B.A."/>
            <person name="Bourque G."/>
            <person name="Lopez-Otin C."/>
            <person name="Puente X.S."/>
            <person name="Chakrabarti K."/>
            <person name="Chatterji S."/>
            <person name="Dewey C."/>
            <person name="Pachter L."/>
            <person name="Bray N."/>
            <person name="Yap V.B."/>
            <person name="Caspi A."/>
            <person name="Tesler G."/>
            <person name="Pevzner P.A."/>
            <person name="Haussler D."/>
            <person name="Roskin K.M."/>
            <person name="Baertsch R."/>
            <person name="Clawson H."/>
            <person name="Furey T.S."/>
            <person name="Hinrichs A.S."/>
            <person name="Karolchik D."/>
            <person name="Kent W.J."/>
            <person name="Rosenbloom K.R."/>
            <person name="Trumbower H."/>
            <person name="Weirauch M."/>
            <person name="Cooper D.N."/>
            <person name="Stenson P.D."/>
            <person name="Ma B."/>
            <person name="Brent M."/>
            <person name="Arumugam M."/>
            <person name="Shteynberg D."/>
            <person name="Copley R.R."/>
            <person name="Taylor M.S."/>
            <person name="Riethman H."/>
            <person name="Mudunuri U."/>
            <person name="Peterson J."/>
            <person name="Guyer M."/>
            <person name="Felsenfeld A."/>
            <person name="Old S."/>
            <person name="Mockrin S."/>
            <person name="Collins F.S."/>
        </authorList>
    </citation>
    <scope>NUCLEOTIDE SEQUENCE [LARGE SCALE GENOMIC DNA]</scope>
    <source>
        <strain>Brown Norway</strain>
    </source>
</reference>
<reference key="2">
    <citation type="submission" date="2005-09" db="EMBL/GenBank/DDBJ databases">
        <authorList>
            <person name="Mural R.J."/>
            <person name="Adams M.D."/>
            <person name="Myers E.W."/>
            <person name="Smith H.O."/>
            <person name="Venter J.C."/>
        </authorList>
    </citation>
    <scope>NUCLEOTIDE SEQUENCE [LARGE SCALE GENOMIC DNA]</scope>
</reference>
<reference key="3">
    <citation type="submission" date="2000-02" db="EMBL/GenBank/DDBJ databases">
        <title>Complete sequence of a rat protein containing a femtomolar-activity-dependent neuroprotective peptide.</title>
        <authorList>
            <person name="Dong M."/>
            <person name="Xu K."/>
            <person name="Du Y."/>
        </authorList>
    </citation>
    <scope>NUCLEOTIDE SEQUENCE [MRNA] OF 281-1103</scope>
</reference>
<reference key="4">
    <citation type="journal article" date="2012" name="Nat. Commun.">
        <title>Quantitative maps of protein phosphorylation sites across 14 different rat organs and tissues.</title>
        <authorList>
            <person name="Lundby A."/>
            <person name="Secher A."/>
            <person name="Lage K."/>
            <person name="Nordsborg N.B."/>
            <person name="Dmytriyev A."/>
            <person name="Lundby C."/>
            <person name="Olsen J.V."/>
        </authorList>
    </citation>
    <scope>PHOSPHORYLATION [LARGE SCALE ANALYSIS] AT SER-886; SER-889; SER-905; SER-954 AND SER-956</scope>
    <scope>IDENTIFICATION BY MASS SPECTROMETRY [LARGE SCALE ANALYSIS]</scope>
</reference>
<keyword id="KW-0007">Acetylation</keyword>
<keyword id="KW-0158">Chromosome</keyword>
<keyword id="KW-0238">DNA-binding</keyword>
<keyword id="KW-0371">Homeobox</keyword>
<keyword id="KW-1017">Isopeptide bond</keyword>
<keyword id="KW-0479">Metal-binding</keyword>
<keyword id="KW-0488">Methylation</keyword>
<keyword id="KW-0539">Nucleus</keyword>
<keyword id="KW-0597">Phosphoprotein</keyword>
<keyword id="KW-1185">Reference proteome</keyword>
<keyword id="KW-0677">Repeat</keyword>
<keyword id="KW-0804">Transcription</keyword>
<keyword id="KW-0805">Transcription regulation</keyword>
<keyword id="KW-0832">Ubl conjugation</keyword>
<keyword id="KW-0862">Zinc</keyword>
<keyword id="KW-0863">Zinc-finger</keyword>
<name>ADNP_RAT</name>
<dbReference type="EMBL" id="AABR07054626">
    <property type="status" value="NOT_ANNOTATED_CDS"/>
    <property type="molecule type" value="Genomic_DNA"/>
</dbReference>
<dbReference type="EMBL" id="AABR07054627">
    <property type="status" value="NOT_ANNOTATED_CDS"/>
    <property type="molecule type" value="Genomic_DNA"/>
</dbReference>
<dbReference type="EMBL" id="AABR07054628">
    <property type="status" value="NOT_ANNOTATED_CDS"/>
    <property type="molecule type" value="Genomic_DNA"/>
</dbReference>
<dbReference type="EMBL" id="CH474005">
    <property type="protein sequence ID" value="EDL96377.1"/>
    <property type="molecule type" value="Genomic_DNA"/>
</dbReference>
<dbReference type="EMBL" id="AF234680">
    <property type="protein sequence ID" value="AAF40431.1"/>
    <property type="molecule type" value="mRNA"/>
</dbReference>
<dbReference type="RefSeq" id="NP_001334461.1">
    <property type="nucleotide sequence ID" value="NM_001347532.1"/>
</dbReference>
<dbReference type="RefSeq" id="NP_001416414.1">
    <property type="nucleotide sequence ID" value="NM_001429485.1"/>
</dbReference>
<dbReference type="RefSeq" id="NP_001416415.1">
    <property type="nucleotide sequence ID" value="NM_001429486.1"/>
</dbReference>
<dbReference type="RefSeq" id="XP_038961737.1">
    <property type="nucleotide sequence ID" value="XM_039105809.2"/>
</dbReference>
<dbReference type="FunCoup" id="Q9JKL8">
    <property type="interactions" value="3582"/>
</dbReference>
<dbReference type="STRING" id="10116.ENSRNOP00000014595"/>
<dbReference type="iPTMnet" id="Q9JKL8"/>
<dbReference type="PhosphoSitePlus" id="Q9JKL8"/>
<dbReference type="jPOST" id="Q9JKL8"/>
<dbReference type="PaxDb" id="10116-ENSRNOP00000014595"/>
<dbReference type="PeptideAtlas" id="Q9JKL8"/>
<dbReference type="Ensembl" id="ENSRNOT00000014595.7">
    <property type="protein sequence ID" value="ENSRNOP00000014595.3"/>
    <property type="gene ID" value="ENSRNOG00000010975.7"/>
</dbReference>
<dbReference type="GeneID" id="64622"/>
<dbReference type="KEGG" id="rno:64622"/>
<dbReference type="AGR" id="RGD:71030"/>
<dbReference type="CTD" id="23394"/>
<dbReference type="RGD" id="71030">
    <property type="gene designation" value="Adnp"/>
</dbReference>
<dbReference type="eggNOG" id="ENOG502QSYX">
    <property type="taxonomic scope" value="Eukaryota"/>
</dbReference>
<dbReference type="GeneTree" id="ENSGT00530000063631"/>
<dbReference type="InParanoid" id="Q9JKL8"/>
<dbReference type="OMA" id="PYCTFNG"/>
<dbReference type="OrthoDB" id="8891572at2759"/>
<dbReference type="TreeFam" id="TF328818"/>
<dbReference type="PRO" id="PR:Q9JKL8"/>
<dbReference type="Proteomes" id="UP000002494">
    <property type="component" value="Chromosome 3"/>
</dbReference>
<dbReference type="Proteomes" id="UP000234681">
    <property type="component" value="Chromosome 3"/>
</dbReference>
<dbReference type="Bgee" id="ENSRNOG00000010975">
    <property type="expression patterns" value="Expressed in Ammon's horn and 20 other cell types or tissues"/>
</dbReference>
<dbReference type="GO" id="GO:0030424">
    <property type="term" value="C:axon"/>
    <property type="evidence" value="ECO:0000314"/>
    <property type="project" value="RGD"/>
</dbReference>
<dbReference type="GO" id="GO:0005694">
    <property type="term" value="C:chromosome"/>
    <property type="evidence" value="ECO:0007669"/>
    <property type="project" value="UniProtKB-SubCell"/>
</dbReference>
<dbReference type="GO" id="GO:0030425">
    <property type="term" value="C:dendrite"/>
    <property type="evidence" value="ECO:0000314"/>
    <property type="project" value="RGD"/>
</dbReference>
<dbReference type="GO" id="GO:0005615">
    <property type="term" value="C:extracellular space"/>
    <property type="evidence" value="ECO:0000314"/>
    <property type="project" value="RGD"/>
</dbReference>
<dbReference type="GO" id="GO:0043025">
    <property type="term" value="C:neuronal cell body"/>
    <property type="evidence" value="ECO:0000314"/>
    <property type="project" value="RGD"/>
</dbReference>
<dbReference type="GO" id="GO:0005634">
    <property type="term" value="C:nucleus"/>
    <property type="evidence" value="ECO:0000318"/>
    <property type="project" value="GO_Central"/>
</dbReference>
<dbReference type="GO" id="GO:0090575">
    <property type="term" value="C:RNA polymerase II transcription regulator complex"/>
    <property type="evidence" value="ECO:0000266"/>
    <property type="project" value="RGD"/>
</dbReference>
<dbReference type="GO" id="GO:0008013">
    <property type="term" value="F:beta-catenin binding"/>
    <property type="evidence" value="ECO:0000266"/>
    <property type="project" value="RGD"/>
</dbReference>
<dbReference type="GO" id="GO:0048487">
    <property type="term" value="F:beta-tubulin binding"/>
    <property type="evidence" value="ECO:0000353"/>
    <property type="project" value="RGD"/>
</dbReference>
<dbReference type="GO" id="GO:0003682">
    <property type="term" value="F:chromatin binding"/>
    <property type="evidence" value="ECO:0000266"/>
    <property type="project" value="RGD"/>
</dbReference>
<dbReference type="GO" id="GO:0005507">
    <property type="term" value="F:copper ion binding"/>
    <property type="evidence" value="ECO:0000314"/>
    <property type="project" value="RGD"/>
</dbReference>
<dbReference type="GO" id="GO:0000981">
    <property type="term" value="F:DNA-binding transcription factor activity, RNA polymerase II-specific"/>
    <property type="evidence" value="ECO:0000266"/>
    <property type="project" value="RGD"/>
</dbReference>
<dbReference type="GO" id="GO:0042277">
    <property type="term" value="F:peptide binding"/>
    <property type="evidence" value="ECO:0000314"/>
    <property type="project" value="RGD"/>
</dbReference>
<dbReference type="GO" id="GO:0000977">
    <property type="term" value="F:RNA polymerase II transcription regulatory region sequence-specific DNA binding"/>
    <property type="evidence" value="ECO:0000266"/>
    <property type="project" value="RGD"/>
</dbReference>
<dbReference type="GO" id="GO:0008270">
    <property type="term" value="F:zinc ion binding"/>
    <property type="evidence" value="ECO:0007669"/>
    <property type="project" value="UniProtKB-KW"/>
</dbReference>
<dbReference type="GO" id="GO:0019934">
    <property type="term" value="P:cGMP-mediated signaling"/>
    <property type="evidence" value="ECO:0000314"/>
    <property type="project" value="RGD"/>
</dbReference>
<dbReference type="GO" id="GO:0044849">
    <property type="term" value="P:estrous cycle"/>
    <property type="evidence" value="ECO:0000270"/>
    <property type="project" value="RGD"/>
</dbReference>
<dbReference type="GO" id="GO:0033484">
    <property type="term" value="P:intracellular nitric oxide homeostasis"/>
    <property type="evidence" value="ECO:0000314"/>
    <property type="project" value="RGD"/>
</dbReference>
<dbReference type="GO" id="GO:0010629">
    <property type="term" value="P:negative regulation of gene expression"/>
    <property type="evidence" value="ECO:0000314"/>
    <property type="project" value="RGD"/>
</dbReference>
<dbReference type="GO" id="GO:0043524">
    <property type="term" value="P:negative regulation of neuron apoptotic process"/>
    <property type="evidence" value="ECO:0000314"/>
    <property type="project" value="RGD"/>
</dbReference>
<dbReference type="GO" id="GO:0050805">
    <property type="term" value="P:negative regulation of synaptic transmission"/>
    <property type="evidence" value="ECO:0000315"/>
    <property type="project" value="RGD"/>
</dbReference>
<dbReference type="GO" id="GO:0051402">
    <property type="term" value="P:neuron apoptotic process"/>
    <property type="evidence" value="ECO:0000266"/>
    <property type="project" value="RGD"/>
</dbReference>
<dbReference type="GO" id="GO:0030182">
    <property type="term" value="P:neuron differentiation"/>
    <property type="evidence" value="ECO:0000266"/>
    <property type="project" value="RGD"/>
</dbReference>
<dbReference type="GO" id="GO:0045773">
    <property type="term" value="P:positive regulation of axon extension"/>
    <property type="evidence" value="ECO:0000314"/>
    <property type="project" value="RGD"/>
</dbReference>
<dbReference type="GO" id="GO:0090263">
    <property type="term" value="P:positive regulation of canonical Wnt signaling pathway"/>
    <property type="evidence" value="ECO:0000266"/>
    <property type="project" value="RGD"/>
</dbReference>
<dbReference type="GO" id="GO:0010976">
    <property type="term" value="P:positive regulation of neuron projection development"/>
    <property type="evidence" value="ECO:0000314"/>
    <property type="project" value="RGD"/>
</dbReference>
<dbReference type="GO" id="GO:0051965">
    <property type="term" value="P:positive regulation of synapse assembly"/>
    <property type="evidence" value="ECO:0000314"/>
    <property type="project" value="RGD"/>
</dbReference>
<dbReference type="GO" id="GO:0010468">
    <property type="term" value="P:regulation of gene expression"/>
    <property type="evidence" value="ECO:0000266"/>
    <property type="project" value="RGD"/>
</dbReference>
<dbReference type="GO" id="GO:0006357">
    <property type="term" value="P:regulation of transcription by RNA polymerase II"/>
    <property type="evidence" value="ECO:0000266"/>
    <property type="project" value="RGD"/>
</dbReference>
<dbReference type="GO" id="GO:0009743">
    <property type="term" value="P:response to carbohydrate"/>
    <property type="evidence" value="ECO:0000270"/>
    <property type="project" value="RGD"/>
</dbReference>
<dbReference type="GO" id="GO:0007614">
    <property type="term" value="P:short-term memory"/>
    <property type="evidence" value="ECO:0000314"/>
    <property type="project" value="RGD"/>
</dbReference>
<dbReference type="CDD" id="cd00086">
    <property type="entry name" value="homeodomain"/>
    <property type="match status" value="1"/>
</dbReference>
<dbReference type="FunFam" id="1.10.10.60:FF:000199">
    <property type="entry name" value="Activity-dependent neuroprotector homeobox b"/>
    <property type="match status" value="1"/>
</dbReference>
<dbReference type="Gene3D" id="3.30.160.60">
    <property type="entry name" value="Classic Zinc Finger"/>
    <property type="match status" value="1"/>
</dbReference>
<dbReference type="Gene3D" id="1.10.10.60">
    <property type="entry name" value="Homeodomain-like"/>
    <property type="match status" value="1"/>
</dbReference>
<dbReference type="InterPro" id="IPR038861">
    <property type="entry name" value="ADNP/ADNP2"/>
</dbReference>
<dbReference type="InterPro" id="IPR045762">
    <property type="entry name" value="ADNP_Znf"/>
</dbReference>
<dbReference type="InterPro" id="IPR001356">
    <property type="entry name" value="HD"/>
</dbReference>
<dbReference type="InterPro" id="IPR009057">
    <property type="entry name" value="Homeodomain-like_sf"/>
</dbReference>
<dbReference type="InterPro" id="IPR013087">
    <property type="entry name" value="Znf_C2H2_type"/>
</dbReference>
<dbReference type="PANTHER" id="PTHR15740:SF1">
    <property type="entry name" value="ACTIVITY-DEPENDENT NEUROPROTECTOR HOMEOBOX PROTEIN"/>
    <property type="match status" value="1"/>
</dbReference>
<dbReference type="PANTHER" id="PTHR15740">
    <property type="entry name" value="NEUROPROTECTIVE PEPTIDE-CONTAINING PROTEIN"/>
    <property type="match status" value="1"/>
</dbReference>
<dbReference type="Pfam" id="PF19627">
    <property type="entry name" value="ADNP_N"/>
    <property type="match status" value="1"/>
</dbReference>
<dbReference type="Pfam" id="PF00046">
    <property type="entry name" value="Homeodomain"/>
    <property type="match status" value="1"/>
</dbReference>
<dbReference type="SMART" id="SM00389">
    <property type="entry name" value="HOX"/>
    <property type="match status" value="1"/>
</dbReference>
<dbReference type="SMART" id="SM00355">
    <property type="entry name" value="ZnF_C2H2"/>
    <property type="match status" value="8"/>
</dbReference>
<dbReference type="SUPFAM" id="SSF46689">
    <property type="entry name" value="Homeodomain-like"/>
    <property type="match status" value="1"/>
</dbReference>
<dbReference type="PROSITE" id="PS50071">
    <property type="entry name" value="HOMEOBOX_2"/>
    <property type="match status" value="1"/>
</dbReference>
<dbReference type="PROSITE" id="PS00028">
    <property type="entry name" value="ZINC_FINGER_C2H2_1"/>
    <property type="match status" value="1"/>
</dbReference>
<dbReference type="PROSITE" id="PS50157">
    <property type="entry name" value="ZINC_FINGER_C2H2_2"/>
    <property type="match status" value="1"/>
</dbReference>
<proteinExistence type="evidence at protein level"/>
<sequence>MFQLPVNNLGSLRKARKTVKKILSDIGLEYCKEHIEDFKQFEPNDFYLKNTTWEDVGLWDPSLTKNQDYRTKPFCCSACPFSSKFFSAYKSHFRNVHSEDFENRILLNCPYCTFNADKKTLETHIKIFHAPNSSAPSSSLSTFKDKNKNDGLKPKQADNVEQAVYYCKKCTYRDPLYEIVRKHIYREHFQHVAAPYIAKAGEKSLNGAVSLGTNAREECNIHCKRCLFMPKSYEALVQHVIEDHERIGYQVTAMIGHTNVVVPRAKPLMLIAPKPQEKKSMGLPPRISSLASGNVRSLPSQQMVNRLSIPKPNLNSTGVNMMSNVHLQQNNYGVKSVGQSYGVGQSVRLGLGGNAPVSIPQQSQSVKQLLPSGNGRSYGLGAEQRPPAAARYSLQTANTSSLPPGQVKSPSVSQSQASRVLGQSSSKPPPAATGPPPSNHCATQKWKICTICNELFPENVYSVHFEKEHKAEKVPAVANYIMKIHNFTSKCLYCNRYLPTDTLLNHMLIHGLSCPYCRSTFNDVEKMAAHMRMVHIDEEMGPKTDSTLSFDLTLQQGSHTNIHLLVTTYNLRDAPAESVAYHAQNNAPVPPKPQPKVQEKADVPVKSSPQAAVPYKKDVGKTLCPLCFSILKGPISDALAHHLRERHQVIQTVHPVEKKLTYKCIHCLGVYTSNMTASTITLHLVHCRGVGKTQNGQDKTNAPSRLNQSPGLAPVKRTYEQMEFPLLKKRKLEDENDSPGCFEEKPEEPVVLALDPKGHEDDSYEARKSFLTKYFNKQPYPTRREIEKLAASLWLWKSDIASHFSNKRKKCVRDCEKYKPGVLLGFNMKELNKVKHEMDFDAEWLFENHDEKASRVNASKTVDKKLNLGKEDDSFSDSFEHLEEESNGSGGPFDPVFEVEPKIPSDNAEEPVPKVIPEGALESEKLDQKEEEDGSKYETIHLTEERAKLMHDASDSEVDQDDVVEWKDGASPSESGPGSRQVSDFEDNTCEMKPGTWSDESSQSEDARSSKPAAKKKATVQDDTEQLKWKNSSYGKVEGFWSKDQSQWENASENAERLPNPQIEWQNSTIDSEDGEQFDSMTDGVADPMHGSLTGVKLSSQQA</sequence>
<feature type="chain" id="PRO_0000048809" description="Activity-dependent neuroprotector homeobox protein">
    <location>
        <begin position="1"/>
        <end position="1103"/>
    </location>
</feature>
<feature type="zinc finger region" description="C2H2-type 1; degenerate" evidence="3">
    <location>
        <begin position="74"/>
        <end position="97"/>
    </location>
</feature>
<feature type="zinc finger region" description="C2H2-type 2; degenerate" evidence="3">
    <location>
        <begin position="107"/>
        <end position="129"/>
    </location>
</feature>
<feature type="zinc finger region" description="C2H2-type 3; degenerate" evidence="3">
    <location>
        <begin position="165"/>
        <end position="188"/>
    </location>
</feature>
<feature type="zinc finger region" description="C2H2-type 4; degenerate" evidence="3">
    <location>
        <begin position="221"/>
        <end position="244"/>
    </location>
</feature>
<feature type="zinc finger region" description="C2H2-type 5; atypical" evidence="3">
    <location>
        <begin position="447"/>
        <end position="469"/>
    </location>
</feature>
<feature type="zinc finger region" description="C2H2-type 6" evidence="3">
    <location>
        <begin position="489"/>
        <end position="510"/>
    </location>
</feature>
<feature type="zinc finger region" description="C2H2-type 7" evidence="3">
    <location>
        <begin position="512"/>
        <end position="535"/>
    </location>
</feature>
<feature type="zinc finger region" description="C2H2-type 8; atypical" evidence="3">
    <location>
        <begin position="622"/>
        <end position="647"/>
    </location>
</feature>
<feature type="zinc finger region" description="C2H2-type 9; atypical" evidence="3">
    <location>
        <begin position="662"/>
        <end position="686"/>
    </location>
</feature>
<feature type="DNA-binding region" description="Homeobox" evidence="4">
    <location>
        <begin position="754"/>
        <end position="814"/>
    </location>
</feature>
<feature type="region of interest" description="Disordered" evidence="5">
    <location>
        <begin position="133"/>
        <end position="154"/>
    </location>
</feature>
<feature type="region of interest" description="Neuroprotective peptide (NAP)" evidence="1">
    <location>
        <begin position="354"/>
        <end position="361"/>
    </location>
</feature>
<feature type="region of interest" description="Disordered" evidence="5">
    <location>
        <begin position="360"/>
        <end position="439"/>
    </location>
</feature>
<feature type="region of interest" description="Disordered" evidence="5">
    <location>
        <begin position="691"/>
        <end position="712"/>
    </location>
</feature>
<feature type="region of interest" description="Disordered" evidence="5">
    <location>
        <begin position="873"/>
        <end position="1029"/>
    </location>
</feature>
<feature type="region of interest" description="Disordered" evidence="5">
    <location>
        <begin position="1045"/>
        <end position="1103"/>
    </location>
</feature>
<feature type="compositionally biased region" description="Basic and acidic residues" evidence="5">
    <location>
        <begin position="143"/>
        <end position="154"/>
    </location>
</feature>
<feature type="compositionally biased region" description="Polar residues" evidence="5">
    <location>
        <begin position="393"/>
        <end position="423"/>
    </location>
</feature>
<feature type="compositionally biased region" description="Pro residues" evidence="5">
    <location>
        <begin position="427"/>
        <end position="438"/>
    </location>
</feature>
<feature type="compositionally biased region" description="Polar residues" evidence="5">
    <location>
        <begin position="692"/>
        <end position="710"/>
    </location>
</feature>
<feature type="compositionally biased region" description="Basic and acidic residues" evidence="5">
    <location>
        <begin position="922"/>
        <end position="954"/>
    </location>
</feature>
<feature type="compositionally biased region" description="Polar residues" evidence="5">
    <location>
        <begin position="972"/>
        <end position="982"/>
    </location>
</feature>
<feature type="modified residue" description="Phosphoserine" evidence="1">
    <location>
        <position position="98"/>
    </location>
</feature>
<feature type="modified residue" description="Asymmetric dimethylarginine" evidence="2">
    <location>
        <position position="348"/>
    </location>
</feature>
<feature type="modified residue" description="Phosphoserine" evidence="1">
    <location>
        <position position="409"/>
    </location>
</feature>
<feature type="modified residue" description="Phosphoserine" evidence="1">
    <location>
        <position position="413"/>
    </location>
</feature>
<feature type="modified residue" description="Phosphoserine" evidence="1">
    <location>
        <position position="608"/>
    </location>
</feature>
<feature type="modified residue" description="Phosphoserine" evidence="1">
    <location>
        <position position="709"/>
    </location>
</feature>
<feature type="modified residue" description="Phosphoserine" evidence="2">
    <location>
        <position position="738"/>
    </location>
</feature>
<feature type="modified residue" description="Phosphoserine" evidence="1">
    <location>
        <position position="805"/>
    </location>
</feature>
<feature type="modified residue" description="Phosphoserine" evidence="1">
    <location>
        <position position="876"/>
    </location>
</feature>
<feature type="modified residue" description="Phosphoserine" evidence="1">
    <location>
        <position position="878"/>
    </location>
</feature>
<feature type="modified residue" description="Phosphoserine" evidence="7">
    <location>
        <position position="886"/>
    </location>
</feature>
<feature type="modified residue" description="Phosphoserine" evidence="7">
    <location>
        <position position="889"/>
    </location>
</feature>
<feature type="modified residue" description="Phosphoserine" evidence="7">
    <location>
        <position position="905"/>
    </location>
</feature>
<feature type="modified residue" description="Phosphoserine" evidence="7">
    <location>
        <position position="954"/>
    </location>
</feature>
<feature type="modified residue" description="Phosphoserine" evidence="7">
    <location>
        <position position="956"/>
    </location>
</feature>
<feature type="modified residue" description="N6-acetyllysine; alternate" evidence="1">
    <location>
        <position position="1036"/>
    </location>
</feature>
<feature type="modified residue" description="N6-acetyllysine; alternate" evidence="1">
    <location>
        <position position="1043"/>
    </location>
</feature>
<feature type="modified residue" description="Phosphoserine" evidence="2">
    <location>
        <position position="1072"/>
    </location>
</feature>
<feature type="cross-link" description="Glycyl lysine isopeptide (Lys-Gly) (interchain with G-Cter in SUMO2)" evidence="1">
    <location>
        <position position="39"/>
    </location>
</feature>
<feature type="cross-link" description="Glycyl lysine isopeptide (Lys-Gly) (interchain with G-Cter in SUMO2)" evidence="1">
    <location>
        <position position="72"/>
    </location>
</feature>
<feature type="cross-link" description="Glycyl lysine isopeptide (Lys-Gly) (interchain with G-Cter in SUMO2)" evidence="1">
    <location>
        <position position="144"/>
    </location>
</feature>
<feature type="cross-link" description="Glycyl lysine isopeptide (Lys-Gly) (interchain with G-Cter in SUMO2)" evidence="1">
    <location>
        <position position="155"/>
    </location>
</feature>
<feature type="cross-link" description="Glycyl lysine isopeptide (Lys-Gly) (interchain with G-Cter in SUMO2)" evidence="1">
    <location>
        <position position="203"/>
    </location>
</feature>
<feature type="cross-link" description="Glycyl lysine isopeptide (Lys-Gly) (interchain with G-Cter in SUMO2)" evidence="1">
    <location>
        <position position="231"/>
    </location>
</feature>
<feature type="cross-link" description="Glycyl lysine isopeptide (Lys-Gly) (interchain with G-Cter in SUMO2)" evidence="1">
    <location>
        <position position="266"/>
    </location>
</feature>
<feature type="cross-link" description="Glycyl lysine isopeptide (Lys-Gly) (interchain with G-Cter in SUMO2)" evidence="1">
    <location>
        <position position="274"/>
    </location>
</feature>
<feature type="cross-link" description="Glycyl lysine isopeptide (Lys-Gly) (interchain with G-Cter in SUMO2)" evidence="1">
    <location>
        <position position="278"/>
    </location>
</feature>
<feature type="cross-link" description="Glycyl lysine isopeptide (Lys-Gly) (interchain with G-Cter in SUMO2)" evidence="1">
    <location>
        <position position="279"/>
    </location>
</feature>
<feature type="cross-link" description="Glycyl lysine isopeptide (Lys-Gly) (interchain with G-Cter in SUMO2)" evidence="1">
    <location>
        <position position="311"/>
    </location>
</feature>
<feature type="cross-link" description="Glycyl lysine isopeptide (Lys-Gly) (interchain with G-Cter in SUMO2)" evidence="1">
    <location>
        <position position="335"/>
    </location>
</feature>
<feature type="cross-link" description="Glycyl lysine isopeptide (Lys-Gly) (interchain with G-Cter in SUMO2)" evidence="1">
    <location>
        <position position="367"/>
    </location>
</feature>
<feature type="cross-link" description="Glycyl lysine isopeptide (Lys-Gly) (interchain with G-Cter in SUMO2)" evidence="1">
    <location>
        <position position="408"/>
    </location>
</feature>
<feature type="cross-link" description="Glycyl lysine isopeptide (Lys-Gly) (interchain with G-Cter in SUMO2)" evidence="1">
    <location>
        <position position="427"/>
    </location>
</feature>
<feature type="cross-link" description="Glycyl lysine isopeptide (Lys-Gly) (interchain with G-Cter in SUMO2)" evidence="1">
    <location>
        <position position="600"/>
    </location>
</feature>
<feature type="cross-link" description="Glycyl lysine isopeptide (Lys-Gly) (interchain with G-Cter in SUMO2)" evidence="1">
    <location>
        <position position="606"/>
    </location>
</feature>
<feature type="cross-link" description="Glycyl lysine isopeptide (Lys-Gly) (interchain with G-Cter in SUMO2)" evidence="1">
    <location>
        <position position="616"/>
    </location>
</feature>
<feature type="cross-link" description="Glycyl lysine isopeptide (Lys-Gly) (interchain with G-Cter in SUMO2)" evidence="1">
    <location>
        <position position="621"/>
    </location>
</feature>
<feature type="cross-link" description="Glycyl lysine isopeptide (Lys-Gly) (interchain with G-Cter in SUMO2)" evidence="1">
    <location>
        <position position="632"/>
    </location>
</feature>
<feature type="cross-link" description="Glycyl lysine isopeptide (Lys-Gly) (interchain with G-Cter in SUMO2)" evidence="1">
    <location>
        <position position="658"/>
    </location>
</feature>
<feature type="cross-link" description="Glycyl lysine isopeptide (Lys-Gly) (interchain with G-Cter in SUMO2)" evidence="1">
    <location>
        <position position="699"/>
    </location>
</feature>
<feature type="cross-link" description="Glycyl lysine isopeptide (Lys-Gly) (interchain with G-Cter in SUMO2)" evidence="1">
    <location>
        <position position="716"/>
    </location>
</feature>
<feature type="cross-link" description="Glycyl lysine isopeptide (Lys-Gly) (interchain with G-Cter in SUMO2)" evidence="1">
    <location>
        <position position="728"/>
    </location>
</feature>
<feature type="cross-link" description="Glycyl lysine isopeptide (Lys-Gly) (interchain with G-Cter in SUMO2)" evidence="1">
    <location>
        <position position="731"/>
    </location>
</feature>
<feature type="cross-link" description="Glycyl lysine isopeptide (Lys-Gly) (interchain with G-Cter in SUMO2)" evidence="1">
    <location>
        <position position="745"/>
    </location>
</feature>
<feature type="cross-link" description="Glycyl lysine isopeptide (Lys-Gly) (interchain with G-Cter in SUMO2)" evidence="1">
    <location>
        <position position="807"/>
    </location>
</feature>
<feature type="cross-link" description="Glycyl lysine isopeptide (Lys-Gly) (interchain with G-Cter in SUMO2)" evidence="1">
    <location>
        <position position="829"/>
    </location>
</feature>
<feature type="cross-link" description="Glycyl lysine isopeptide (Lys-Gly) (interchain with G-Cter in SUMO2)" evidence="1">
    <location>
        <position position="835"/>
    </location>
</feature>
<feature type="cross-link" description="Glycyl lysine isopeptide (Lys-Gly) (interchain with G-Cter in SUMO2)" evidence="1">
    <location>
        <position position="914"/>
    </location>
</feature>
<feature type="cross-link" description="Glycyl lysine isopeptide (Lys-Gly) (interchain with G-Cter in SUMO2)" evidence="1">
    <location>
        <position position="929"/>
    </location>
</feature>
<feature type="cross-link" description="Glycyl lysine isopeptide (Lys-Gly) (interchain with G-Cter in SUMO2)" evidence="1">
    <location>
        <position position="936"/>
    </location>
</feature>
<feature type="cross-link" description="Glycyl lysine isopeptide (Lys-Gly) (interchain with G-Cter in SUMO2)" evidence="1">
    <location>
        <position position="1017"/>
    </location>
</feature>
<feature type="cross-link" description="Glycyl lysine isopeptide (Lys-Gly) (interchain with G-Cter in SUMO2); alternate" evidence="1">
    <location>
        <position position="1036"/>
    </location>
</feature>
<feature type="cross-link" description="Glycyl lysine isopeptide (Lys-Gly) (interchain with G-Cter in SUMO2); alternate" evidence="1">
    <location>
        <position position="1043"/>
    </location>
</feature>
<feature type="sequence conflict" description="In Ref. 3; AAF40431." evidence="6" ref="3">
    <original>P</original>
    <variation>A</variation>
    <location>
        <position position="499"/>
    </location>
</feature>
<feature type="sequence conflict" description="In Ref. 3; AAF40431." evidence="6" ref="3">
    <original>L</original>
    <variation>H</variation>
    <location>
        <position position="866"/>
    </location>
</feature>
<gene>
    <name type="primary">Adnp</name>
</gene>
<evidence type="ECO:0000250" key="1">
    <source>
        <dbReference type="UniProtKB" id="Q9H2P0"/>
    </source>
</evidence>
<evidence type="ECO:0000250" key="2">
    <source>
        <dbReference type="UniProtKB" id="Q9Z103"/>
    </source>
</evidence>
<evidence type="ECO:0000255" key="3">
    <source>
        <dbReference type="PROSITE-ProRule" id="PRU00042"/>
    </source>
</evidence>
<evidence type="ECO:0000255" key="4">
    <source>
        <dbReference type="PROSITE-ProRule" id="PRU00108"/>
    </source>
</evidence>
<evidence type="ECO:0000256" key="5">
    <source>
        <dbReference type="SAM" id="MobiDB-lite"/>
    </source>
</evidence>
<evidence type="ECO:0000305" key="6"/>
<evidence type="ECO:0007744" key="7">
    <source>
    </source>
</evidence>
<accession>Q9JKL8</accession>
<accession>G3V7G3</accession>
<comment type="function">
    <text evidence="2">May be involved in transcriptional regulation. May mediate some of the neuroprotective peptide VIP-associated effects involving normal growth and cancer proliferation. Positively modulates WNT-beta-catenin/CTNN1B signaling, acting by regulating phosphorylation of, and thereby stabilizing, CTNNB1. May be required for neural induction and neuronal differentiation. May be involved in erythroid differentiation.</text>
</comment>
<comment type="subunit">
    <text evidence="2">Interacts (via N-terminal region) with beta-catenin/CTNNB1 (via the central armadillo domains); interaction is direct and stabilizes CTNNB1 by modulating its phosphorylation by glycogen synthase kinase-3 beta GSK3B.</text>
</comment>
<comment type="subcellular location">
    <subcellularLocation>
        <location evidence="4">Nucleus</location>
    </subcellularLocation>
    <subcellularLocation>
        <location evidence="2">Chromosome</location>
    </subcellularLocation>
</comment>
<comment type="induction">
    <text>By the neuroprotective peptide VIP.</text>
</comment>